<keyword id="KW-0963">Cytoplasm</keyword>
<keyword id="KW-0328">Glycosyltransferase</keyword>
<keyword id="KW-0660">Purine salvage</keyword>
<keyword id="KW-0808">Transferase</keyword>
<proteinExistence type="inferred from homology"/>
<feature type="chain" id="PRO_0000321411" description="Adenine phosphoribosyltransferase">
    <location>
        <begin position="1"/>
        <end position="183"/>
    </location>
</feature>
<sequence length="183" mass="19498">MTATEQQLALIKQSIKSVPDYPKPGILFRDVTSLLENSRAYAASIALLADRFRDAGLTKIVGTEARGFLFGTPVALALGLGFVPVRKPGKLPRETISENYVLEYGTDGLEIHKDAIVPGDKVLVVDDLLATGGTICATVKLIRRLGGEVQDAAFVINLAYLGGETLLNSIGVASYSLVLFPGH</sequence>
<reference key="1">
    <citation type="journal article" date="2006" name="Genome Res.">
        <title>Massive genome erosion and functional adaptations provide insights into the symbiotic lifestyle of Sodalis glossinidius in the tsetse host.</title>
        <authorList>
            <person name="Toh H."/>
            <person name="Weiss B.L."/>
            <person name="Perkin S.A.H."/>
            <person name="Yamashita A."/>
            <person name="Oshima K."/>
            <person name="Hattori M."/>
            <person name="Aksoy S."/>
        </authorList>
    </citation>
    <scope>NUCLEOTIDE SEQUENCE [LARGE SCALE GENOMIC DNA]</scope>
    <source>
        <strain>morsitans</strain>
    </source>
</reference>
<organism>
    <name type="scientific">Sodalis glossinidius (strain morsitans)</name>
    <dbReference type="NCBI Taxonomy" id="343509"/>
    <lineage>
        <taxon>Bacteria</taxon>
        <taxon>Pseudomonadati</taxon>
        <taxon>Pseudomonadota</taxon>
        <taxon>Gammaproteobacteria</taxon>
        <taxon>Enterobacterales</taxon>
        <taxon>Bruguierivoracaceae</taxon>
        <taxon>Sodalis</taxon>
    </lineage>
</organism>
<comment type="function">
    <text evidence="1">Catalyzes a salvage reaction resulting in the formation of AMP, that is energically less costly than de novo synthesis.</text>
</comment>
<comment type="catalytic activity">
    <reaction evidence="1">
        <text>AMP + diphosphate = 5-phospho-alpha-D-ribose 1-diphosphate + adenine</text>
        <dbReference type="Rhea" id="RHEA:16609"/>
        <dbReference type="ChEBI" id="CHEBI:16708"/>
        <dbReference type="ChEBI" id="CHEBI:33019"/>
        <dbReference type="ChEBI" id="CHEBI:58017"/>
        <dbReference type="ChEBI" id="CHEBI:456215"/>
        <dbReference type="EC" id="2.4.2.7"/>
    </reaction>
</comment>
<comment type="pathway">
    <text evidence="1">Purine metabolism; AMP biosynthesis via salvage pathway; AMP from adenine: step 1/1.</text>
</comment>
<comment type="subunit">
    <text evidence="1">Homodimer.</text>
</comment>
<comment type="subcellular location">
    <subcellularLocation>
        <location evidence="1">Cytoplasm</location>
    </subcellularLocation>
</comment>
<comment type="similarity">
    <text evidence="1">Belongs to the purine/pyrimidine phosphoribosyltransferase family.</text>
</comment>
<gene>
    <name evidence="1" type="primary">apt</name>
    <name type="ordered locus">SG0688</name>
</gene>
<evidence type="ECO:0000255" key="1">
    <source>
        <dbReference type="HAMAP-Rule" id="MF_00004"/>
    </source>
</evidence>
<name>APT_SODGM</name>
<accession>Q2NV62</accession>
<protein>
    <recommendedName>
        <fullName evidence="1">Adenine phosphoribosyltransferase</fullName>
        <shortName evidence="1">APRT</shortName>
        <ecNumber evidence="1">2.4.2.7</ecNumber>
    </recommendedName>
</protein>
<dbReference type="EC" id="2.4.2.7" evidence="1"/>
<dbReference type="EMBL" id="AP008232">
    <property type="protein sequence ID" value="BAE73963.1"/>
    <property type="molecule type" value="Genomic_DNA"/>
</dbReference>
<dbReference type="RefSeq" id="WP_011410551.1">
    <property type="nucleotide sequence ID" value="NC_007712.1"/>
</dbReference>
<dbReference type="SMR" id="Q2NV62"/>
<dbReference type="STRING" id="343509.SG0688"/>
<dbReference type="KEGG" id="sgl:SG0688"/>
<dbReference type="eggNOG" id="COG0503">
    <property type="taxonomic scope" value="Bacteria"/>
</dbReference>
<dbReference type="HOGENOM" id="CLU_063339_3_0_6"/>
<dbReference type="OrthoDB" id="9803963at2"/>
<dbReference type="UniPathway" id="UPA00588">
    <property type="reaction ID" value="UER00646"/>
</dbReference>
<dbReference type="Proteomes" id="UP000001932">
    <property type="component" value="Chromosome"/>
</dbReference>
<dbReference type="GO" id="GO:0005829">
    <property type="term" value="C:cytosol"/>
    <property type="evidence" value="ECO:0007669"/>
    <property type="project" value="TreeGrafter"/>
</dbReference>
<dbReference type="GO" id="GO:0003999">
    <property type="term" value="F:adenine phosphoribosyltransferase activity"/>
    <property type="evidence" value="ECO:0007669"/>
    <property type="project" value="UniProtKB-UniRule"/>
</dbReference>
<dbReference type="GO" id="GO:0006168">
    <property type="term" value="P:adenine salvage"/>
    <property type="evidence" value="ECO:0007669"/>
    <property type="project" value="InterPro"/>
</dbReference>
<dbReference type="GO" id="GO:0044209">
    <property type="term" value="P:AMP salvage"/>
    <property type="evidence" value="ECO:0007669"/>
    <property type="project" value="UniProtKB-UniRule"/>
</dbReference>
<dbReference type="GO" id="GO:0006166">
    <property type="term" value="P:purine ribonucleoside salvage"/>
    <property type="evidence" value="ECO:0007669"/>
    <property type="project" value="UniProtKB-KW"/>
</dbReference>
<dbReference type="CDD" id="cd06223">
    <property type="entry name" value="PRTases_typeI"/>
    <property type="match status" value="1"/>
</dbReference>
<dbReference type="FunFam" id="3.40.50.2020:FF:000004">
    <property type="entry name" value="Adenine phosphoribosyltransferase"/>
    <property type="match status" value="1"/>
</dbReference>
<dbReference type="Gene3D" id="3.40.50.2020">
    <property type="match status" value="1"/>
</dbReference>
<dbReference type="HAMAP" id="MF_00004">
    <property type="entry name" value="Aden_phosphoribosyltr"/>
    <property type="match status" value="1"/>
</dbReference>
<dbReference type="InterPro" id="IPR005764">
    <property type="entry name" value="Ade_phspho_trans"/>
</dbReference>
<dbReference type="InterPro" id="IPR050120">
    <property type="entry name" value="Adenine_PRTase"/>
</dbReference>
<dbReference type="InterPro" id="IPR000836">
    <property type="entry name" value="PRibTrfase_dom"/>
</dbReference>
<dbReference type="InterPro" id="IPR029057">
    <property type="entry name" value="PRTase-like"/>
</dbReference>
<dbReference type="NCBIfam" id="TIGR01090">
    <property type="entry name" value="apt"/>
    <property type="match status" value="1"/>
</dbReference>
<dbReference type="NCBIfam" id="NF002632">
    <property type="entry name" value="PRK02304.1-1"/>
    <property type="match status" value="1"/>
</dbReference>
<dbReference type="NCBIfam" id="NF002634">
    <property type="entry name" value="PRK02304.1-3"/>
    <property type="match status" value="1"/>
</dbReference>
<dbReference type="NCBIfam" id="NF002636">
    <property type="entry name" value="PRK02304.1-5"/>
    <property type="match status" value="1"/>
</dbReference>
<dbReference type="PANTHER" id="PTHR11776">
    <property type="entry name" value="ADENINE PHOSPHORIBOSYLTRANSFERASE"/>
    <property type="match status" value="1"/>
</dbReference>
<dbReference type="PANTHER" id="PTHR11776:SF7">
    <property type="entry name" value="PHOSPHORIBOSYLTRANSFERASE DOMAIN-CONTAINING PROTEIN"/>
    <property type="match status" value="1"/>
</dbReference>
<dbReference type="Pfam" id="PF00156">
    <property type="entry name" value="Pribosyltran"/>
    <property type="match status" value="1"/>
</dbReference>
<dbReference type="SUPFAM" id="SSF53271">
    <property type="entry name" value="PRTase-like"/>
    <property type="match status" value="1"/>
</dbReference>
<dbReference type="PROSITE" id="PS00103">
    <property type="entry name" value="PUR_PYR_PR_TRANSFER"/>
    <property type="match status" value="1"/>
</dbReference>